<sequence>MNATDIERCRKRIIQYIWDPEPKNDEEPGSPIWCLGTRYPPQCVEETADESRNPDHGQQQNTNTSAPGWPEAFLLDFESKIWMTYRSNFPPIPKDAGQEGSLSLTLGVRLRSQLIDAQGFTSDTGWGCMIRSGQSLLANSMAILLLGRDWRRGERLEEEGKLLSLFADSPHAPFSIHSFVKHGADFCGKHPGEWFGPTATARCIQGLAARYDQSNLQVYIADDNSDVHQDKFMSVSRDEKGTVRPTLILLGLRLGIDRITAVYWNGLKAVLQLPQSVGIAGGRPSASHYFVAVQGSHFFYLDPHNTRPALRYSESGTYTEDEVNTYHTRRLRRLNIQDMDPSMLIGFLIRDEDDWEDWKARIMSLEGKPIITILSESDAASWKGRREALDEVEAFDDLDVAL</sequence>
<reference key="1">
    <citation type="journal article" date="2005" name="Nature">
        <title>Sequencing of Aspergillus nidulans and comparative analysis with A. fumigatus and A. oryzae.</title>
        <authorList>
            <person name="Galagan J.E."/>
            <person name="Calvo S.E."/>
            <person name="Cuomo C."/>
            <person name="Ma L.-J."/>
            <person name="Wortman J.R."/>
            <person name="Batzoglou S."/>
            <person name="Lee S.-I."/>
            <person name="Bastuerkmen M."/>
            <person name="Spevak C.C."/>
            <person name="Clutterbuck J."/>
            <person name="Kapitonov V."/>
            <person name="Jurka J."/>
            <person name="Scazzocchio C."/>
            <person name="Farman M.L."/>
            <person name="Butler J."/>
            <person name="Purcell S."/>
            <person name="Harris S."/>
            <person name="Braus G.H."/>
            <person name="Draht O."/>
            <person name="Busch S."/>
            <person name="D'Enfert C."/>
            <person name="Bouchier C."/>
            <person name="Goldman G.H."/>
            <person name="Bell-Pedersen D."/>
            <person name="Griffiths-Jones S."/>
            <person name="Doonan J.H."/>
            <person name="Yu J."/>
            <person name="Vienken K."/>
            <person name="Pain A."/>
            <person name="Freitag M."/>
            <person name="Selker E.U."/>
            <person name="Archer D.B."/>
            <person name="Penalva M.A."/>
            <person name="Oakley B.R."/>
            <person name="Momany M."/>
            <person name="Tanaka T."/>
            <person name="Kumagai T."/>
            <person name="Asai K."/>
            <person name="Machida M."/>
            <person name="Nierman W.C."/>
            <person name="Denning D.W."/>
            <person name="Caddick M.X."/>
            <person name="Hynes M."/>
            <person name="Paoletti M."/>
            <person name="Fischer R."/>
            <person name="Miller B.L."/>
            <person name="Dyer P.S."/>
            <person name="Sachs M.S."/>
            <person name="Osmani S.A."/>
            <person name="Birren B.W."/>
        </authorList>
    </citation>
    <scope>NUCLEOTIDE SEQUENCE [LARGE SCALE GENOMIC DNA]</scope>
    <source>
        <strain>FGSC A4 / ATCC 38163 / CBS 112.46 / NRRL 194 / M139</strain>
    </source>
</reference>
<reference key="2">
    <citation type="journal article" date="2009" name="Fungal Genet. Biol.">
        <title>The 2008 update of the Aspergillus nidulans genome annotation: a community effort.</title>
        <authorList>
            <person name="Wortman J.R."/>
            <person name="Gilsenan J.M."/>
            <person name="Joardar V."/>
            <person name="Deegan J."/>
            <person name="Clutterbuck J."/>
            <person name="Andersen M.R."/>
            <person name="Archer D."/>
            <person name="Bencina M."/>
            <person name="Braus G."/>
            <person name="Coutinho P."/>
            <person name="von Dohren H."/>
            <person name="Doonan J."/>
            <person name="Driessen A.J."/>
            <person name="Durek P."/>
            <person name="Espeso E."/>
            <person name="Fekete E."/>
            <person name="Flipphi M."/>
            <person name="Estrada C.G."/>
            <person name="Geysens S."/>
            <person name="Goldman G."/>
            <person name="de Groot P.W."/>
            <person name="Hansen K."/>
            <person name="Harris S.D."/>
            <person name="Heinekamp T."/>
            <person name="Helmstaedt K."/>
            <person name="Henrissat B."/>
            <person name="Hofmann G."/>
            <person name="Homan T."/>
            <person name="Horio T."/>
            <person name="Horiuchi H."/>
            <person name="James S."/>
            <person name="Jones M."/>
            <person name="Karaffa L."/>
            <person name="Karanyi Z."/>
            <person name="Kato M."/>
            <person name="Keller N."/>
            <person name="Kelly D.E."/>
            <person name="Kiel J.A."/>
            <person name="Kim J.M."/>
            <person name="van der Klei I.J."/>
            <person name="Klis F.M."/>
            <person name="Kovalchuk A."/>
            <person name="Krasevec N."/>
            <person name="Kubicek C.P."/>
            <person name="Liu B."/>
            <person name="Maccabe A."/>
            <person name="Meyer V."/>
            <person name="Mirabito P."/>
            <person name="Miskei M."/>
            <person name="Mos M."/>
            <person name="Mullins J."/>
            <person name="Nelson D.R."/>
            <person name="Nielsen J."/>
            <person name="Oakley B.R."/>
            <person name="Osmani S.A."/>
            <person name="Pakula T."/>
            <person name="Paszewski A."/>
            <person name="Paulsen I."/>
            <person name="Pilsyk S."/>
            <person name="Pocsi I."/>
            <person name="Punt P.J."/>
            <person name="Ram A.F."/>
            <person name="Ren Q."/>
            <person name="Robellet X."/>
            <person name="Robson G."/>
            <person name="Seiboth B."/>
            <person name="van Solingen P."/>
            <person name="Specht T."/>
            <person name="Sun J."/>
            <person name="Taheri-Talesh N."/>
            <person name="Takeshita N."/>
            <person name="Ussery D."/>
            <person name="vanKuyk P.A."/>
            <person name="Visser H."/>
            <person name="van de Vondervoort P.J."/>
            <person name="de Vries R.P."/>
            <person name="Walton J."/>
            <person name="Xiang X."/>
            <person name="Xiong Y."/>
            <person name="Zeng A.P."/>
            <person name="Brandt B.W."/>
            <person name="Cornell M.J."/>
            <person name="van den Hondel C.A."/>
            <person name="Visser J."/>
            <person name="Oliver S.G."/>
            <person name="Turner G."/>
        </authorList>
    </citation>
    <scope>GENOME REANNOTATION</scope>
    <source>
        <strain>FGSC A4 / ATCC 38163 / CBS 112.46 / NRRL 194 / M139</strain>
    </source>
</reference>
<name>ATG4_EMENI</name>
<comment type="function">
    <text evidence="1">Cysteine protease that plays a key role in cytoplasm to vacuole transport (Cvt) and autophagy by mediating both proteolytic activation and delipidation of ATG8. Required for selective autophagic degradation of the nucleus (nucleophagy) as well as for mitophagy which contributes to regulate mitochondrial quantity and quality by eliminating the mitochondria to a basal level to fulfill cellular energy requirements and preventing excess ROS production. The protease activity is required for proteolytic activation of ATG8: cleaves the C-terminal amino acid of ATG8 to reveal a C-terminal glycine. ATG8 ubiquitin-like activity requires the exposure of the glycine at the C-terminus for its conjugation to phosphatidylethanolamine (PE) and its insertion to membranes, which is necessary for autophagy. The ATG8-PE conjugate mediates tethering between adjacent membranes and stimulates membrane hemifusion, leading to expansion of the autophagosomal membrane during autophagy. In addition to the protease activity, also catalyzes deconjugation of PE-conjugated forms of ATG8 during macroautophagy: ATG8 delipidation is required to release the protein from membranes, which facilitates multiple events during macroautophagy, and especially for efficient autophagosome biogenesis, the assembly of ATG9-containing tubulovesicular clusters into phagophores/autophagosomes, and for the disassembly of PAS-associated ATG components. ATG8 delipidation by ATG4 also recycles ATG8-PE generated on inappropriate membranes to maintain a reservoir of unlipidated ATG8 that is required for autophagosome formation at the PAS.</text>
</comment>
<comment type="catalytic activity">
    <reaction evidence="1">
        <text>[protein]-C-terminal L-amino acid-glycyl-phosphatidylethanolamide + H2O = [protein]-C-terminal L-amino acid-glycine + a 1,2-diacyl-sn-glycero-3-phosphoethanolamine</text>
        <dbReference type="Rhea" id="RHEA:67548"/>
        <dbReference type="Rhea" id="RHEA-COMP:17323"/>
        <dbReference type="Rhea" id="RHEA-COMP:17324"/>
        <dbReference type="ChEBI" id="CHEBI:15377"/>
        <dbReference type="ChEBI" id="CHEBI:64612"/>
        <dbReference type="ChEBI" id="CHEBI:172940"/>
        <dbReference type="ChEBI" id="CHEBI:172941"/>
    </reaction>
    <physiologicalReaction direction="left-to-right" evidence="1">
        <dbReference type="Rhea" id="RHEA:67549"/>
    </physiologicalReaction>
</comment>
<comment type="subcellular location">
    <subcellularLocation>
        <location evidence="1">Cytoplasm</location>
    </subcellularLocation>
    <subcellularLocation>
        <location evidence="1">Nucleus</location>
    </subcellularLocation>
    <subcellularLocation>
        <location evidence="1">Preautophagosomal structure</location>
    </subcellularLocation>
</comment>
<comment type="similarity">
    <text evidence="4">Belongs to the peptidase C54 family.</text>
</comment>
<comment type="sequence caution" evidence="4">
    <conflict type="erroneous gene model prediction">
        <sequence resource="EMBL-CDS" id="EAA63010"/>
    </conflict>
</comment>
<keyword id="KW-0072">Autophagy</keyword>
<keyword id="KW-0963">Cytoplasm</keyword>
<keyword id="KW-0378">Hydrolase</keyword>
<keyword id="KW-0539">Nucleus</keyword>
<keyword id="KW-0645">Protease</keyword>
<keyword id="KW-0653">Protein transport</keyword>
<keyword id="KW-1185">Reference proteome</keyword>
<keyword id="KW-0788">Thiol protease</keyword>
<keyword id="KW-0813">Transport</keyword>
<dbReference type="EC" id="3.4.22.-"/>
<dbReference type="EMBL" id="AACD01000058">
    <property type="protein sequence ID" value="EAA63010.1"/>
    <property type="status" value="ALT_SEQ"/>
    <property type="molecule type" value="Genomic_DNA"/>
</dbReference>
<dbReference type="EMBL" id="BN001306">
    <property type="protein sequence ID" value="CBF82642.1"/>
    <property type="molecule type" value="Genomic_DNA"/>
</dbReference>
<dbReference type="RefSeq" id="XP_661074.1">
    <property type="nucleotide sequence ID" value="XM_655982.1"/>
</dbReference>
<dbReference type="SMR" id="Q5B7L0"/>
<dbReference type="FunCoup" id="Q5B7L0">
    <property type="interactions" value="295"/>
</dbReference>
<dbReference type="STRING" id="227321.Q5B7L0"/>
<dbReference type="MEROPS" id="C54.001"/>
<dbReference type="EnsemblFungi" id="CBF82642">
    <property type="protein sequence ID" value="CBF82642"/>
    <property type="gene ID" value="ANIA_03470"/>
</dbReference>
<dbReference type="VEuPathDB" id="FungiDB:AN3470"/>
<dbReference type="eggNOG" id="KOG2674">
    <property type="taxonomic scope" value="Eukaryota"/>
</dbReference>
<dbReference type="HOGENOM" id="CLU_021259_5_1_1"/>
<dbReference type="InParanoid" id="Q5B7L0"/>
<dbReference type="OMA" id="TGFGCMI"/>
<dbReference type="OrthoDB" id="2960936at2759"/>
<dbReference type="Proteomes" id="UP000000560">
    <property type="component" value="Chromosome VI"/>
</dbReference>
<dbReference type="GO" id="GO:0005737">
    <property type="term" value="C:cytoplasm"/>
    <property type="evidence" value="ECO:0000318"/>
    <property type="project" value="GO_Central"/>
</dbReference>
<dbReference type="GO" id="GO:0005829">
    <property type="term" value="C:cytosol"/>
    <property type="evidence" value="ECO:0007669"/>
    <property type="project" value="EnsemblFungi"/>
</dbReference>
<dbReference type="GO" id="GO:0005739">
    <property type="term" value="C:mitochondrion"/>
    <property type="evidence" value="ECO:0007669"/>
    <property type="project" value="EnsemblFungi"/>
</dbReference>
<dbReference type="GO" id="GO:0005634">
    <property type="term" value="C:nucleus"/>
    <property type="evidence" value="ECO:0007669"/>
    <property type="project" value="UniProtKB-SubCell"/>
</dbReference>
<dbReference type="GO" id="GO:0000407">
    <property type="term" value="C:phagophore assembly site"/>
    <property type="evidence" value="ECO:0007669"/>
    <property type="project" value="UniProtKB-SubCell"/>
</dbReference>
<dbReference type="GO" id="GO:0004197">
    <property type="term" value="F:cysteine-type endopeptidase activity"/>
    <property type="evidence" value="ECO:0000318"/>
    <property type="project" value="GO_Central"/>
</dbReference>
<dbReference type="GO" id="GO:0019786">
    <property type="term" value="F:protein-phosphatidylethanolamide deconjugating activity"/>
    <property type="evidence" value="ECO:0000318"/>
    <property type="project" value="GO_Central"/>
</dbReference>
<dbReference type="GO" id="GO:0035973">
    <property type="term" value="P:aggrephagy"/>
    <property type="evidence" value="ECO:0000318"/>
    <property type="project" value="GO_Central"/>
</dbReference>
<dbReference type="GO" id="GO:0000045">
    <property type="term" value="P:autophagosome assembly"/>
    <property type="evidence" value="ECO:0000318"/>
    <property type="project" value="GO_Central"/>
</dbReference>
<dbReference type="GO" id="GO:0000423">
    <property type="term" value="P:mitophagy"/>
    <property type="evidence" value="ECO:0000318"/>
    <property type="project" value="GO_Central"/>
</dbReference>
<dbReference type="GO" id="GO:0034727">
    <property type="term" value="P:piecemeal microautophagy of the nucleus"/>
    <property type="evidence" value="ECO:0000318"/>
    <property type="project" value="GO_Central"/>
</dbReference>
<dbReference type="GO" id="GO:0016485">
    <property type="term" value="P:protein processing"/>
    <property type="evidence" value="ECO:0000318"/>
    <property type="project" value="GO_Central"/>
</dbReference>
<dbReference type="GO" id="GO:0006612">
    <property type="term" value="P:protein targeting to membrane"/>
    <property type="evidence" value="ECO:0007669"/>
    <property type="project" value="EnsemblFungi"/>
</dbReference>
<dbReference type="GO" id="GO:0015031">
    <property type="term" value="P:protein transport"/>
    <property type="evidence" value="ECO:0007669"/>
    <property type="project" value="UniProtKB-KW"/>
</dbReference>
<dbReference type="InterPro" id="IPR038765">
    <property type="entry name" value="Papain-like_cys_pep_sf"/>
</dbReference>
<dbReference type="InterPro" id="IPR005078">
    <property type="entry name" value="Peptidase_C54"/>
</dbReference>
<dbReference type="InterPro" id="IPR046792">
    <property type="entry name" value="Peptidase_C54_cat"/>
</dbReference>
<dbReference type="PANTHER" id="PTHR22624:SF49">
    <property type="entry name" value="CYSTEINE PROTEASE"/>
    <property type="match status" value="1"/>
</dbReference>
<dbReference type="PANTHER" id="PTHR22624">
    <property type="entry name" value="CYSTEINE PROTEASE ATG4"/>
    <property type="match status" value="1"/>
</dbReference>
<dbReference type="Pfam" id="PF03416">
    <property type="entry name" value="Peptidase_C54"/>
    <property type="match status" value="1"/>
</dbReference>
<dbReference type="SUPFAM" id="SSF54001">
    <property type="entry name" value="Cysteine proteinases"/>
    <property type="match status" value="1"/>
</dbReference>
<organism>
    <name type="scientific">Emericella nidulans (strain FGSC A4 / ATCC 38163 / CBS 112.46 / NRRL 194 / M139)</name>
    <name type="common">Aspergillus nidulans</name>
    <dbReference type="NCBI Taxonomy" id="227321"/>
    <lineage>
        <taxon>Eukaryota</taxon>
        <taxon>Fungi</taxon>
        <taxon>Dikarya</taxon>
        <taxon>Ascomycota</taxon>
        <taxon>Pezizomycotina</taxon>
        <taxon>Eurotiomycetes</taxon>
        <taxon>Eurotiomycetidae</taxon>
        <taxon>Eurotiales</taxon>
        <taxon>Aspergillaceae</taxon>
        <taxon>Aspergillus</taxon>
        <taxon>Aspergillus subgen. Nidulantes</taxon>
    </lineage>
</organism>
<evidence type="ECO:0000250" key="1">
    <source>
        <dbReference type="UniProtKB" id="P53867"/>
    </source>
</evidence>
<evidence type="ECO:0000250" key="2">
    <source>
        <dbReference type="UniProtKB" id="Q9Y4P1"/>
    </source>
</evidence>
<evidence type="ECO:0000256" key="3">
    <source>
        <dbReference type="SAM" id="MobiDB-lite"/>
    </source>
</evidence>
<evidence type="ECO:0000305" key="4"/>
<protein>
    <recommendedName>
        <fullName>Cysteine protease atg4</fullName>
        <ecNumber>3.4.22.-</ecNumber>
    </recommendedName>
    <alternativeName>
        <fullName>Autophagy-related protein 4</fullName>
    </alternativeName>
</protein>
<feature type="chain" id="PRO_0000215862" description="Cysteine protease atg4">
    <location>
        <begin position="1"/>
        <end position="402"/>
    </location>
</feature>
<feature type="region of interest" description="Disordered" evidence="3">
    <location>
        <begin position="46"/>
        <end position="68"/>
    </location>
</feature>
<feature type="compositionally biased region" description="Polar residues" evidence="3">
    <location>
        <begin position="56"/>
        <end position="66"/>
    </location>
</feature>
<feature type="active site" description="Nucleophile" evidence="2">
    <location>
        <position position="128"/>
    </location>
</feature>
<feature type="active site" evidence="2">
    <location>
        <position position="302"/>
    </location>
</feature>
<feature type="active site" evidence="2">
    <location>
        <position position="304"/>
    </location>
</feature>
<proteinExistence type="inferred from homology"/>
<gene>
    <name type="primary">atg4</name>
    <name type="ORF">AN3470</name>
</gene>
<accession>Q5B7L0</accession>
<accession>C8VH95</accession>